<comment type="function">
    <text evidence="1">Channel that opens in response to stretch forces in the membrane lipid bilayer. May participate in the regulation of osmotic pressure changes within the cell.</text>
</comment>
<comment type="subunit">
    <text evidence="1">Homopentamer.</text>
</comment>
<comment type="subcellular location">
    <subcellularLocation>
        <location evidence="1">Cell inner membrane</location>
        <topology evidence="1">Multi-pass membrane protein</topology>
    </subcellularLocation>
</comment>
<comment type="similarity">
    <text evidence="1">Belongs to the MscL family.</text>
</comment>
<dbReference type="EMBL" id="CP001396">
    <property type="protein sequence ID" value="ACR63728.1"/>
    <property type="molecule type" value="Genomic_DNA"/>
</dbReference>
<dbReference type="RefSeq" id="WP_000022442.1">
    <property type="nucleotide sequence ID" value="NC_012759.1"/>
</dbReference>
<dbReference type="SMR" id="C4ZUE5"/>
<dbReference type="GeneID" id="75173461"/>
<dbReference type="KEGG" id="ebw:BWG_2981"/>
<dbReference type="HOGENOM" id="CLU_095787_0_0_6"/>
<dbReference type="GO" id="GO:0005886">
    <property type="term" value="C:plasma membrane"/>
    <property type="evidence" value="ECO:0007669"/>
    <property type="project" value="UniProtKB-SubCell"/>
</dbReference>
<dbReference type="GO" id="GO:0008381">
    <property type="term" value="F:mechanosensitive monoatomic ion channel activity"/>
    <property type="evidence" value="ECO:0007669"/>
    <property type="project" value="UniProtKB-UniRule"/>
</dbReference>
<dbReference type="FunFam" id="1.10.1200.120:FF:000001">
    <property type="entry name" value="Large-conductance mechanosensitive channel"/>
    <property type="match status" value="1"/>
</dbReference>
<dbReference type="Gene3D" id="1.10.1200.120">
    <property type="entry name" value="Large-conductance mechanosensitive channel, MscL, domain 1"/>
    <property type="match status" value="1"/>
</dbReference>
<dbReference type="HAMAP" id="MF_00115">
    <property type="entry name" value="MscL"/>
    <property type="match status" value="1"/>
</dbReference>
<dbReference type="InterPro" id="IPR019823">
    <property type="entry name" value="Mechanosensitive_channel_CS"/>
</dbReference>
<dbReference type="InterPro" id="IPR001185">
    <property type="entry name" value="MS_channel"/>
</dbReference>
<dbReference type="InterPro" id="IPR037673">
    <property type="entry name" value="MSC/AndL"/>
</dbReference>
<dbReference type="InterPro" id="IPR036019">
    <property type="entry name" value="MscL_channel"/>
</dbReference>
<dbReference type="NCBIfam" id="TIGR00220">
    <property type="entry name" value="mscL"/>
    <property type="match status" value="1"/>
</dbReference>
<dbReference type="NCBIfam" id="NF001841">
    <property type="entry name" value="PRK00567.1-1"/>
    <property type="match status" value="1"/>
</dbReference>
<dbReference type="NCBIfam" id="NF001843">
    <property type="entry name" value="PRK00567.1-4"/>
    <property type="match status" value="1"/>
</dbReference>
<dbReference type="PANTHER" id="PTHR30266:SF2">
    <property type="entry name" value="LARGE-CONDUCTANCE MECHANOSENSITIVE CHANNEL"/>
    <property type="match status" value="1"/>
</dbReference>
<dbReference type="PANTHER" id="PTHR30266">
    <property type="entry name" value="MECHANOSENSITIVE CHANNEL MSCL"/>
    <property type="match status" value="1"/>
</dbReference>
<dbReference type="Pfam" id="PF01741">
    <property type="entry name" value="MscL"/>
    <property type="match status" value="1"/>
</dbReference>
<dbReference type="PRINTS" id="PR01264">
    <property type="entry name" value="MECHCHANNEL"/>
</dbReference>
<dbReference type="SUPFAM" id="SSF81330">
    <property type="entry name" value="Gated mechanosensitive channel"/>
    <property type="match status" value="1"/>
</dbReference>
<dbReference type="PROSITE" id="PS01327">
    <property type="entry name" value="MSCL"/>
    <property type="match status" value="1"/>
</dbReference>
<feature type="chain" id="PRO_1000202973" description="Large-conductance mechanosensitive channel">
    <location>
        <begin position="1"/>
        <end position="136"/>
    </location>
</feature>
<feature type="transmembrane region" description="Helical" evidence="1">
    <location>
        <begin position="10"/>
        <end position="30"/>
    </location>
</feature>
<feature type="transmembrane region" description="Helical" evidence="1">
    <location>
        <begin position="76"/>
        <end position="96"/>
    </location>
</feature>
<organism>
    <name type="scientific">Escherichia coli (strain K12 / MC4100 / BW2952)</name>
    <dbReference type="NCBI Taxonomy" id="595496"/>
    <lineage>
        <taxon>Bacteria</taxon>
        <taxon>Pseudomonadati</taxon>
        <taxon>Pseudomonadota</taxon>
        <taxon>Gammaproteobacteria</taxon>
        <taxon>Enterobacterales</taxon>
        <taxon>Enterobacteriaceae</taxon>
        <taxon>Escherichia</taxon>
    </lineage>
</organism>
<gene>
    <name evidence="1" type="primary">mscL</name>
    <name type="ordered locus">BWG_2981</name>
</gene>
<keyword id="KW-0997">Cell inner membrane</keyword>
<keyword id="KW-1003">Cell membrane</keyword>
<keyword id="KW-0407">Ion channel</keyword>
<keyword id="KW-0406">Ion transport</keyword>
<keyword id="KW-0472">Membrane</keyword>
<keyword id="KW-0812">Transmembrane</keyword>
<keyword id="KW-1133">Transmembrane helix</keyword>
<keyword id="KW-0813">Transport</keyword>
<sequence length="136" mass="14957">MSIIKEFREFAMRGNVVDLAVGVIIGAAFGKIVSSLVADIIMPPLGLLIGGIDFKQFAVTLRDAQGDIPAVVMHYGVFIQNVFDFLIVAFAIFMAIKLINKLNRKKEEPAAAPAPTKEEVLLTEIRDLLKEQNNRS</sequence>
<evidence type="ECO:0000255" key="1">
    <source>
        <dbReference type="HAMAP-Rule" id="MF_00115"/>
    </source>
</evidence>
<reference key="1">
    <citation type="journal article" date="2009" name="J. Bacteriol.">
        <title>Genomic sequencing reveals regulatory mutations and recombinational events in the widely used MC4100 lineage of Escherichia coli K-12.</title>
        <authorList>
            <person name="Ferenci T."/>
            <person name="Zhou Z."/>
            <person name="Betteridge T."/>
            <person name="Ren Y."/>
            <person name="Liu Y."/>
            <person name="Feng L."/>
            <person name="Reeves P.R."/>
            <person name="Wang L."/>
        </authorList>
    </citation>
    <scope>NUCLEOTIDE SEQUENCE [LARGE SCALE GENOMIC DNA]</scope>
    <source>
        <strain>K12 / MC4100 / BW2952</strain>
    </source>
</reference>
<proteinExistence type="inferred from homology"/>
<accession>C4ZUE5</accession>
<protein>
    <recommendedName>
        <fullName evidence="1">Large-conductance mechanosensitive channel</fullName>
    </recommendedName>
</protein>
<name>MSCL_ECOBW</name>